<accession>B7LH72</accession>
<dbReference type="EC" id="4.1.2.40" evidence="1"/>
<dbReference type="EMBL" id="CU928145">
    <property type="protein sequence ID" value="CAU99745.1"/>
    <property type="molecule type" value="Genomic_DNA"/>
</dbReference>
<dbReference type="RefSeq" id="WP_000022766.1">
    <property type="nucleotide sequence ID" value="NC_011748.1"/>
</dbReference>
<dbReference type="SMR" id="B7LH72"/>
<dbReference type="GeneID" id="75203745"/>
<dbReference type="KEGG" id="eck:EC55989_3557"/>
<dbReference type="HOGENOM" id="CLU_040088_0_1_6"/>
<dbReference type="UniPathway" id="UPA00704">
    <property type="reaction ID" value="UER00716"/>
</dbReference>
<dbReference type="Proteomes" id="UP000000746">
    <property type="component" value="Chromosome"/>
</dbReference>
<dbReference type="GO" id="GO:0005829">
    <property type="term" value="C:cytosol"/>
    <property type="evidence" value="ECO:0007669"/>
    <property type="project" value="TreeGrafter"/>
</dbReference>
<dbReference type="GO" id="GO:0009025">
    <property type="term" value="F:tagatose-bisphosphate aldolase activity"/>
    <property type="evidence" value="ECO:0007669"/>
    <property type="project" value="UniProtKB-UniRule"/>
</dbReference>
<dbReference type="GO" id="GO:0008270">
    <property type="term" value="F:zinc ion binding"/>
    <property type="evidence" value="ECO:0007669"/>
    <property type="project" value="UniProtKB-UniRule"/>
</dbReference>
<dbReference type="GO" id="GO:0005975">
    <property type="term" value="P:carbohydrate metabolic process"/>
    <property type="evidence" value="ECO:0007669"/>
    <property type="project" value="InterPro"/>
</dbReference>
<dbReference type="GO" id="GO:2001059">
    <property type="term" value="P:D-tagatose 6-phosphate catabolic process"/>
    <property type="evidence" value="ECO:0007669"/>
    <property type="project" value="UniProtKB-UniRule"/>
</dbReference>
<dbReference type="CDD" id="cd00453">
    <property type="entry name" value="FTBP_aldolase_II"/>
    <property type="match status" value="1"/>
</dbReference>
<dbReference type="FunFam" id="3.20.20.70:FF:000043">
    <property type="entry name" value="D-tagatose-1,6-bisphosphate aldolase subunit GatY"/>
    <property type="match status" value="1"/>
</dbReference>
<dbReference type="Gene3D" id="3.20.20.70">
    <property type="entry name" value="Aldolase class I"/>
    <property type="match status" value="1"/>
</dbReference>
<dbReference type="HAMAP" id="MF_01293">
    <property type="entry name" value="TagBP_aldolase_KbaY"/>
    <property type="match status" value="1"/>
</dbReference>
<dbReference type="InterPro" id="IPR013785">
    <property type="entry name" value="Aldolase_TIM"/>
</dbReference>
<dbReference type="InterPro" id="IPR050246">
    <property type="entry name" value="Class_II_FBP_aldolase"/>
</dbReference>
<dbReference type="InterPro" id="IPR000771">
    <property type="entry name" value="FBA_II"/>
</dbReference>
<dbReference type="InterPro" id="IPR023788">
    <property type="entry name" value="TagBP_ald_KbaY"/>
</dbReference>
<dbReference type="InterPro" id="IPR011288">
    <property type="entry name" value="TagBP_ald_KbaY/GatY"/>
</dbReference>
<dbReference type="NCBIfam" id="TIGR00167">
    <property type="entry name" value="cbbA"/>
    <property type="match status" value="1"/>
</dbReference>
<dbReference type="NCBIfam" id="NF006626">
    <property type="entry name" value="PRK09195.1"/>
    <property type="match status" value="1"/>
</dbReference>
<dbReference type="NCBIfam" id="NF009374">
    <property type="entry name" value="PRK12737.1"/>
    <property type="match status" value="1"/>
</dbReference>
<dbReference type="NCBIfam" id="NF009375">
    <property type="entry name" value="PRK12738.1"/>
    <property type="match status" value="1"/>
</dbReference>
<dbReference type="NCBIfam" id="TIGR01858">
    <property type="entry name" value="tag_bisphos_ald"/>
    <property type="match status" value="1"/>
</dbReference>
<dbReference type="PANTHER" id="PTHR30304">
    <property type="entry name" value="D-TAGATOSE-1,6-BISPHOSPHATE ALDOLASE"/>
    <property type="match status" value="1"/>
</dbReference>
<dbReference type="PANTHER" id="PTHR30304:SF0">
    <property type="entry name" value="D-TAGATOSE-1,6-BISPHOSPHATE ALDOLASE SUBUNIT GATY-RELATED"/>
    <property type="match status" value="1"/>
</dbReference>
<dbReference type="Pfam" id="PF01116">
    <property type="entry name" value="F_bP_aldolase"/>
    <property type="match status" value="1"/>
</dbReference>
<dbReference type="PIRSF" id="PIRSF001359">
    <property type="entry name" value="F_bP_aldolase_II"/>
    <property type="match status" value="1"/>
</dbReference>
<dbReference type="SUPFAM" id="SSF51569">
    <property type="entry name" value="Aldolase"/>
    <property type="match status" value="1"/>
</dbReference>
<dbReference type="PROSITE" id="PS00602">
    <property type="entry name" value="ALDOLASE_CLASS_II_1"/>
    <property type="match status" value="1"/>
</dbReference>
<dbReference type="PROSITE" id="PS00806">
    <property type="entry name" value="ALDOLASE_CLASS_II_2"/>
    <property type="match status" value="1"/>
</dbReference>
<protein>
    <recommendedName>
        <fullName evidence="1">D-tagatose-1,6-bisphosphate aldolase subunit KbaY</fullName>
        <shortName evidence="1">TBPA</shortName>
        <shortName evidence="1">TagBP aldolase</shortName>
        <ecNumber evidence="1">4.1.2.40</ecNumber>
    </recommendedName>
    <alternativeName>
        <fullName evidence="1">D-tagatose-bisphosphate aldolase class II</fullName>
    </alternativeName>
    <alternativeName>
        <fullName evidence="1">Ketose 1,6-bisphosphate aldolase class II</fullName>
    </alternativeName>
    <alternativeName>
        <fullName evidence="1">Tagatose-bisphosphate aldolase</fullName>
    </alternativeName>
</protein>
<feature type="chain" id="PRO_1000165276" description="D-tagatose-1,6-bisphosphate aldolase subunit KbaY">
    <location>
        <begin position="1"/>
        <end position="286"/>
    </location>
</feature>
<feature type="active site" description="Proton donor" evidence="1">
    <location>
        <position position="82"/>
    </location>
</feature>
<feature type="binding site" evidence="1">
    <location>
        <position position="83"/>
    </location>
    <ligand>
        <name>Zn(2+)</name>
        <dbReference type="ChEBI" id="CHEBI:29105"/>
        <note>catalytic</note>
    </ligand>
</feature>
<feature type="binding site" evidence="1">
    <location>
        <position position="180"/>
    </location>
    <ligand>
        <name>Zn(2+)</name>
        <dbReference type="ChEBI" id="CHEBI:29105"/>
        <note>catalytic</note>
    </ligand>
</feature>
<feature type="binding site" evidence="1">
    <location>
        <position position="181"/>
    </location>
    <ligand>
        <name>dihydroxyacetone phosphate</name>
        <dbReference type="ChEBI" id="CHEBI:57642"/>
    </ligand>
</feature>
<feature type="binding site" evidence="1">
    <location>
        <position position="208"/>
    </location>
    <ligand>
        <name>Zn(2+)</name>
        <dbReference type="ChEBI" id="CHEBI:29105"/>
        <note>catalytic</note>
    </ligand>
</feature>
<feature type="binding site" evidence="1">
    <location>
        <begin position="209"/>
        <end position="211"/>
    </location>
    <ligand>
        <name>dihydroxyacetone phosphate</name>
        <dbReference type="ChEBI" id="CHEBI:57642"/>
    </ligand>
</feature>
<feature type="binding site" evidence="1">
    <location>
        <begin position="230"/>
        <end position="233"/>
    </location>
    <ligand>
        <name>dihydroxyacetone phosphate</name>
        <dbReference type="ChEBI" id="CHEBI:57642"/>
    </ligand>
</feature>
<evidence type="ECO:0000255" key="1">
    <source>
        <dbReference type="HAMAP-Rule" id="MF_01293"/>
    </source>
</evidence>
<gene>
    <name evidence="1" type="primary">kbaY</name>
    <name type="ordered locus">EC55989_3557</name>
</gene>
<name>KBAY_ECO55</name>
<comment type="function">
    <text evidence="1">Catalytic subunit of the tagatose-1,6-bisphosphate aldolase KbaYZ, which catalyzes the reversible aldol condensation of dihydroxyacetone phosphate (DHAP or glycerone-phosphate) with glyceraldehyde 3-phosphate (G3P) to produce tagatose 1,6-bisphosphate (TBP). Requires KbaZ subunit for full activity and stability.</text>
</comment>
<comment type="catalytic activity">
    <reaction evidence="1">
        <text>D-tagatofuranose 1,6-bisphosphate = D-glyceraldehyde 3-phosphate + dihydroxyacetone phosphate</text>
        <dbReference type="Rhea" id="RHEA:22948"/>
        <dbReference type="ChEBI" id="CHEBI:57642"/>
        <dbReference type="ChEBI" id="CHEBI:58694"/>
        <dbReference type="ChEBI" id="CHEBI:59776"/>
        <dbReference type="EC" id="4.1.2.40"/>
    </reaction>
</comment>
<comment type="cofactor">
    <cofactor evidence="1">
        <name>Zn(2+)</name>
        <dbReference type="ChEBI" id="CHEBI:29105"/>
    </cofactor>
    <text evidence="1">Binds 1 zinc ion per subunit.</text>
</comment>
<comment type="pathway">
    <text evidence="1">Carbohydrate metabolism; D-tagatose 6-phosphate degradation; D-glyceraldehyde 3-phosphate and glycerone phosphate from D-tagatose 6-phosphate: step 2/2.</text>
</comment>
<comment type="subunit">
    <text evidence="1">Homotetramer. Forms a complex with KbaZ.</text>
</comment>
<comment type="similarity">
    <text evidence="1">Belongs to the class II fructose-bisphosphate aldolase family. TagBP aldolase KbaY subfamily.</text>
</comment>
<reference key="1">
    <citation type="journal article" date="2009" name="PLoS Genet.">
        <title>Organised genome dynamics in the Escherichia coli species results in highly diverse adaptive paths.</title>
        <authorList>
            <person name="Touchon M."/>
            <person name="Hoede C."/>
            <person name="Tenaillon O."/>
            <person name="Barbe V."/>
            <person name="Baeriswyl S."/>
            <person name="Bidet P."/>
            <person name="Bingen E."/>
            <person name="Bonacorsi S."/>
            <person name="Bouchier C."/>
            <person name="Bouvet O."/>
            <person name="Calteau A."/>
            <person name="Chiapello H."/>
            <person name="Clermont O."/>
            <person name="Cruveiller S."/>
            <person name="Danchin A."/>
            <person name="Diard M."/>
            <person name="Dossat C."/>
            <person name="Karoui M.E."/>
            <person name="Frapy E."/>
            <person name="Garry L."/>
            <person name="Ghigo J.M."/>
            <person name="Gilles A.M."/>
            <person name="Johnson J."/>
            <person name="Le Bouguenec C."/>
            <person name="Lescat M."/>
            <person name="Mangenot S."/>
            <person name="Martinez-Jehanne V."/>
            <person name="Matic I."/>
            <person name="Nassif X."/>
            <person name="Oztas S."/>
            <person name="Petit M.A."/>
            <person name="Pichon C."/>
            <person name="Rouy Z."/>
            <person name="Ruf C.S."/>
            <person name="Schneider D."/>
            <person name="Tourret J."/>
            <person name="Vacherie B."/>
            <person name="Vallenet D."/>
            <person name="Medigue C."/>
            <person name="Rocha E.P.C."/>
            <person name="Denamur E."/>
        </authorList>
    </citation>
    <scope>NUCLEOTIDE SEQUENCE [LARGE SCALE GENOMIC DNA]</scope>
    <source>
        <strain>55989 / EAEC</strain>
    </source>
</reference>
<sequence length="286" mass="31294">MSIISTKYLLQDAQANGYAVPAFNIHNAETIQAILEVCSEMRSPVILAGTPGTFKHIALEEIYALCSAYSTTYNMPLALHLDHHESLDDIRRKVHAGVRSAMIDGSHFPFAENVKLVKSVVDFCHSQDCSVEAELGRLGGVEDDMSVDAESAFLTDPQEAKRFVELTGVDSLAVAIGTAHGLYSKTPKIDFQRLAEIREVVDVPLVLHGASDVPDEFVRRTIELGVTKVNVATELKIAFAGAVKAWFAENPQGNDPRYYMRVGMDAMKEVVRNKINVCGSANRISA</sequence>
<organism>
    <name type="scientific">Escherichia coli (strain 55989 / EAEC)</name>
    <dbReference type="NCBI Taxonomy" id="585055"/>
    <lineage>
        <taxon>Bacteria</taxon>
        <taxon>Pseudomonadati</taxon>
        <taxon>Pseudomonadota</taxon>
        <taxon>Gammaproteobacteria</taxon>
        <taxon>Enterobacterales</taxon>
        <taxon>Enterobacteriaceae</taxon>
        <taxon>Escherichia</taxon>
    </lineage>
</organism>
<proteinExistence type="inferred from homology"/>
<keyword id="KW-0456">Lyase</keyword>
<keyword id="KW-0479">Metal-binding</keyword>
<keyword id="KW-1185">Reference proteome</keyword>
<keyword id="KW-0862">Zinc</keyword>